<keyword id="KW-0170">Cobalt</keyword>
<keyword id="KW-0456">Lyase</keyword>
<keyword id="KW-0464">Manganese</keyword>
<protein>
    <recommendedName>
        <fullName evidence="1">Inosose dehydratase</fullName>
        <ecNumber evidence="1">4.2.1.44</ecNumber>
    </recommendedName>
    <alternativeName>
        <fullName evidence="1">2-keto-myo-inositol dehydratase</fullName>
        <shortName evidence="1">2KMI dehydratase</shortName>
    </alternativeName>
</protein>
<gene>
    <name evidence="1" type="primary">iolE</name>
    <name type="ordered locus">MHJ_0224</name>
</gene>
<sequence>MNKIWKLKNVKVGVAPILWTNDDMPELGGDISFDQAISEMAEAGYQGTEIGNKFPKDEKILLRELKKYNLEIASAWFSGYIISDFEKNFQDFQKHCLFLKALGAKVVVFSEQTYSIQGQNKPLFKDKPYFTNQEFENLAQGLNKFGKWSKQHGIELVYHHHMGTGIQSLKETEKILELTDPEFVSLIFDTGHFAHAGEDIVFCLKRLISRIRHIHLKDIRKEKINELKTKNLSFLEGVKQGIFTVPGDGDIKNYPLFFELLAKNNYQGWLIVEAEQDPRKANPLEYAKKAMDYLRSLISW</sequence>
<dbReference type="EC" id="4.2.1.44" evidence="1"/>
<dbReference type="EMBL" id="AE017243">
    <property type="protein sequence ID" value="AAZ44315.2"/>
    <property type="molecule type" value="Genomic_DNA"/>
</dbReference>
<dbReference type="RefSeq" id="WP_044284610.1">
    <property type="nucleotide sequence ID" value="NC_007295.1"/>
</dbReference>
<dbReference type="SMR" id="Q4AAA6"/>
<dbReference type="GeneID" id="41334529"/>
<dbReference type="KEGG" id="mhj:MHJ_0224"/>
<dbReference type="eggNOG" id="COG1082">
    <property type="taxonomic scope" value="Bacteria"/>
</dbReference>
<dbReference type="HOGENOM" id="CLU_059523_0_0_14"/>
<dbReference type="OrthoDB" id="9779184at2"/>
<dbReference type="Proteomes" id="UP000000548">
    <property type="component" value="Chromosome"/>
</dbReference>
<dbReference type="GO" id="GO:0030145">
    <property type="term" value="F:manganese ion binding"/>
    <property type="evidence" value="ECO:0007669"/>
    <property type="project" value="UniProtKB-UniRule"/>
</dbReference>
<dbReference type="GO" id="GO:0050114">
    <property type="term" value="F:myo-inosose-2 dehydratase activity"/>
    <property type="evidence" value="ECO:0007669"/>
    <property type="project" value="UniProtKB-UniRule"/>
</dbReference>
<dbReference type="GO" id="GO:0019310">
    <property type="term" value="P:inositol catabolic process"/>
    <property type="evidence" value="ECO:0007669"/>
    <property type="project" value="UniProtKB-UniRule"/>
</dbReference>
<dbReference type="Gene3D" id="3.20.20.150">
    <property type="entry name" value="Divalent-metal-dependent TIM barrel enzymes"/>
    <property type="match status" value="1"/>
</dbReference>
<dbReference type="HAMAP" id="MF_01672">
    <property type="entry name" value="IolE"/>
    <property type="match status" value="1"/>
</dbReference>
<dbReference type="InterPro" id="IPR023952">
    <property type="entry name" value="IolE"/>
</dbReference>
<dbReference type="InterPro" id="IPR030823">
    <property type="entry name" value="IolE/MocC"/>
</dbReference>
<dbReference type="InterPro" id="IPR050312">
    <property type="entry name" value="IolE/XylAMocC-like"/>
</dbReference>
<dbReference type="InterPro" id="IPR036237">
    <property type="entry name" value="Xyl_isomerase-like_sf"/>
</dbReference>
<dbReference type="InterPro" id="IPR013022">
    <property type="entry name" value="Xyl_isomerase-like_TIM-brl"/>
</dbReference>
<dbReference type="NCBIfam" id="TIGR04379">
    <property type="entry name" value="myo_inos_iolE"/>
    <property type="match status" value="1"/>
</dbReference>
<dbReference type="PANTHER" id="PTHR12110">
    <property type="entry name" value="HYDROXYPYRUVATE ISOMERASE"/>
    <property type="match status" value="1"/>
</dbReference>
<dbReference type="PANTHER" id="PTHR12110:SF41">
    <property type="entry name" value="INOSOSE DEHYDRATASE"/>
    <property type="match status" value="1"/>
</dbReference>
<dbReference type="Pfam" id="PF01261">
    <property type="entry name" value="AP_endonuc_2"/>
    <property type="match status" value="1"/>
</dbReference>
<dbReference type="SUPFAM" id="SSF51658">
    <property type="entry name" value="Xylose isomerase-like"/>
    <property type="match status" value="1"/>
</dbReference>
<name>IOLE_MESHJ</name>
<organism>
    <name type="scientific">Mesomycoplasma hyopneumoniae (strain J / ATCC 25934 / NCTC 10110)</name>
    <name type="common">Mycoplasma hyopneumoniae</name>
    <dbReference type="NCBI Taxonomy" id="262719"/>
    <lineage>
        <taxon>Bacteria</taxon>
        <taxon>Bacillati</taxon>
        <taxon>Mycoplasmatota</taxon>
        <taxon>Mycoplasmoidales</taxon>
        <taxon>Metamycoplasmataceae</taxon>
        <taxon>Mesomycoplasma</taxon>
    </lineage>
</organism>
<feature type="chain" id="PRO_0000352377" description="Inosose dehydratase">
    <location>
        <begin position="1"/>
        <end position="300"/>
    </location>
</feature>
<proteinExistence type="inferred from homology"/>
<comment type="function">
    <text evidence="1">Catalyzes the dehydration of inosose (2-keto-myo-inositol, 2KMI or 2,4,6/3,5-pentahydroxycyclohexanone) to 3D-(3,5/4)-trihydroxycyclohexane-1,2-dione (D-2,3-diketo-4-deoxy-epi-inositol).</text>
</comment>
<comment type="catalytic activity">
    <reaction evidence="1">
        <text>scyllo-inosose = 3D-3,5/4-trihydroxycyclohexane-1,2-dione + H2O</text>
        <dbReference type="Rhea" id="RHEA:14065"/>
        <dbReference type="ChEBI" id="CHEBI:15377"/>
        <dbReference type="ChEBI" id="CHEBI:17811"/>
        <dbReference type="ChEBI" id="CHEBI:28446"/>
        <dbReference type="EC" id="4.2.1.44"/>
    </reaction>
</comment>
<comment type="cofactor">
    <cofactor evidence="1">
        <name>glutathione</name>
        <dbReference type="ChEBI" id="CHEBI:57925"/>
    </cofactor>
</comment>
<comment type="cofactor">
    <cofactor evidence="1">
        <name>Co(2+)</name>
        <dbReference type="ChEBI" id="CHEBI:48828"/>
    </cofactor>
    <cofactor evidence="1">
        <name>Mn(2+)</name>
        <dbReference type="ChEBI" id="CHEBI:29035"/>
    </cofactor>
</comment>
<comment type="similarity">
    <text evidence="1">Belongs to the IolE/MocC family.</text>
</comment>
<evidence type="ECO:0000255" key="1">
    <source>
        <dbReference type="HAMAP-Rule" id="MF_01672"/>
    </source>
</evidence>
<accession>Q4AAA6</accession>
<reference key="1">
    <citation type="journal article" date="2005" name="J. Bacteriol.">
        <title>Swine and poultry pathogens: the complete genome sequences of two strains of Mycoplasma hyopneumoniae and a strain of Mycoplasma synoviae.</title>
        <authorList>
            <person name="Vasconcelos A.T.R."/>
            <person name="Ferreira H.B."/>
            <person name="Bizarro C.V."/>
            <person name="Bonatto S.L."/>
            <person name="Carvalho M.O."/>
            <person name="Pinto P.M."/>
            <person name="Almeida D.F."/>
            <person name="Almeida L.G.P."/>
            <person name="Almeida R."/>
            <person name="Alves-Junior L."/>
            <person name="Assuncao E.N."/>
            <person name="Azevedo V.A.C."/>
            <person name="Bogo M.R."/>
            <person name="Brigido M.M."/>
            <person name="Brocchi M."/>
            <person name="Burity H.A."/>
            <person name="Camargo A.A."/>
            <person name="Camargo S.S."/>
            <person name="Carepo M.S."/>
            <person name="Carraro D.M."/>
            <person name="de Mattos Cascardo J.C."/>
            <person name="Castro L.A."/>
            <person name="Cavalcanti G."/>
            <person name="Chemale G."/>
            <person name="Collevatti R.G."/>
            <person name="Cunha C.W."/>
            <person name="Dallagiovanna B."/>
            <person name="Dambros B.P."/>
            <person name="Dellagostin O.A."/>
            <person name="Falcao C."/>
            <person name="Fantinatti-Garboggini F."/>
            <person name="Felipe M.S.S."/>
            <person name="Fiorentin L."/>
            <person name="Franco G.R."/>
            <person name="Freitas N.S.A."/>
            <person name="Frias D."/>
            <person name="Grangeiro T.B."/>
            <person name="Grisard E.C."/>
            <person name="Guimaraes C.T."/>
            <person name="Hungria M."/>
            <person name="Jardim S.N."/>
            <person name="Krieger M.A."/>
            <person name="Laurino J.P."/>
            <person name="Lima L.F.A."/>
            <person name="Lopes M.I."/>
            <person name="Loreto E.L.S."/>
            <person name="Madeira H.M.F."/>
            <person name="Manfio G.P."/>
            <person name="Maranhao A.Q."/>
            <person name="Martinkovics C.T."/>
            <person name="Medeiros S.R.B."/>
            <person name="Moreira M.A.M."/>
            <person name="Neiva M."/>
            <person name="Ramalho-Neto C.E."/>
            <person name="Nicolas M.F."/>
            <person name="Oliveira S.C."/>
            <person name="Paixao R.F.C."/>
            <person name="Pedrosa F.O."/>
            <person name="Pena S.D.J."/>
            <person name="Pereira M."/>
            <person name="Pereira-Ferrari L."/>
            <person name="Piffer I."/>
            <person name="Pinto L.S."/>
            <person name="Potrich D.P."/>
            <person name="Salim A.C.M."/>
            <person name="Santos F.R."/>
            <person name="Schmitt R."/>
            <person name="Schneider M.P.C."/>
            <person name="Schrank A."/>
            <person name="Schrank I.S."/>
            <person name="Schuck A.F."/>
            <person name="Seuanez H.N."/>
            <person name="Silva D.W."/>
            <person name="Silva R."/>
            <person name="Silva S.C."/>
            <person name="Soares C.M.A."/>
            <person name="Souza K.R.L."/>
            <person name="Souza R.C."/>
            <person name="Staats C.C."/>
            <person name="Steffens M.B.R."/>
            <person name="Teixeira S.M.R."/>
            <person name="Urmenyi T.P."/>
            <person name="Vainstein M.H."/>
            <person name="Zuccherato L.W."/>
            <person name="Simpson A.J.G."/>
            <person name="Zaha A."/>
        </authorList>
    </citation>
    <scope>NUCLEOTIDE SEQUENCE [LARGE SCALE GENOMIC DNA]</scope>
    <source>
        <strain>J / ATCC 25934 / NCTC 10110</strain>
    </source>
</reference>